<proteinExistence type="evidence at protein level"/>
<dbReference type="EMBL" id="AL123456">
    <property type="protein sequence ID" value="CCP43635.1"/>
    <property type="status" value="ALT_INIT"/>
    <property type="molecule type" value="Genomic_DNA"/>
</dbReference>
<dbReference type="PIR" id="D70781">
    <property type="entry name" value="D70781"/>
</dbReference>
<dbReference type="RefSeq" id="NP_215402.1">
    <property type="nucleotide sequence ID" value="NC_000962.3"/>
</dbReference>
<dbReference type="SMR" id="P9WKQ3"/>
<dbReference type="FunCoup" id="P9WKQ3">
    <property type="interactions" value="13"/>
</dbReference>
<dbReference type="STRING" id="83332.Rv0887c"/>
<dbReference type="PaxDb" id="83332-Rv0887c"/>
<dbReference type="GeneID" id="885113"/>
<dbReference type="KEGG" id="mtu:Rv0887c"/>
<dbReference type="TubercuList" id="Rv0887c"/>
<dbReference type="eggNOG" id="COG2764">
    <property type="taxonomic scope" value="Bacteria"/>
</dbReference>
<dbReference type="InParanoid" id="P9WKQ3"/>
<dbReference type="OrthoDB" id="9795306at2"/>
<dbReference type="Proteomes" id="UP000001584">
    <property type="component" value="Chromosome"/>
</dbReference>
<dbReference type="CDD" id="cd07246">
    <property type="entry name" value="VOC_like"/>
    <property type="match status" value="1"/>
</dbReference>
<dbReference type="Gene3D" id="3.30.720.110">
    <property type="match status" value="1"/>
</dbReference>
<dbReference type="Gene3D" id="3.30.720.120">
    <property type="match status" value="1"/>
</dbReference>
<dbReference type="InterPro" id="IPR029068">
    <property type="entry name" value="Glyas_Bleomycin-R_OHBP_Dase"/>
</dbReference>
<dbReference type="InterPro" id="IPR004360">
    <property type="entry name" value="Glyas_Fos-R_dOase_dom"/>
</dbReference>
<dbReference type="InterPro" id="IPR037523">
    <property type="entry name" value="VOC"/>
</dbReference>
<dbReference type="PANTHER" id="PTHR34109">
    <property type="entry name" value="BNAUNNG04460D PROTEIN-RELATED"/>
    <property type="match status" value="1"/>
</dbReference>
<dbReference type="PANTHER" id="PTHR34109:SF1">
    <property type="entry name" value="VOC DOMAIN-CONTAINING PROTEIN"/>
    <property type="match status" value="1"/>
</dbReference>
<dbReference type="Pfam" id="PF00903">
    <property type="entry name" value="Glyoxalase"/>
    <property type="match status" value="1"/>
</dbReference>
<dbReference type="SUPFAM" id="SSF54593">
    <property type="entry name" value="Glyoxalase/Bleomycin resistance protein/Dihydroxybiphenyl dioxygenase"/>
    <property type="match status" value="1"/>
</dbReference>
<dbReference type="PROSITE" id="PS51819">
    <property type="entry name" value="VOC"/>
    <property type="match status" value="1"/>
</dbReference>
<organism>
    <name type="scientific">Mycobacterium tuberculosis (strain ATCC 25618 / H37Rv)</name>
    <dbReference type="NCBI Taxonomy" id="83332"/>
    <lineage>
        <taxon>Bacteria</taxon>
        <taxon>Bacillati</taxon>
        <taxon>Actinomycetota</taxon>
        <taxon>Actinomycetes</taxon>
        <taxon>Mycobacteriales</taxon>
        <taxon>Mycobacteriaceae</taxon>
        <taxon>Mycobacterium</taxon>
        <taxon>Mycobacterium tuberculosis complex</taxon>
    </lineage>
</organism>
<reference key="1">
    <citation type="journal article" date="1998" name="Nature">
        <title>Deciphering the biology of Mycobacterium tuberculosis from the complete genome sequence.</title>
        <authorList>
            <person name="Cole S.T."/>
            <person name="Brosch R."/>
            <person name="Parkhill J."/>
            <person name="Garnier T."/>
            <person name="Churcher C.M."/>
            <person name="Harris D.E."/>
            <person name="Gordon S.V."/>
            <person name="Eiglmeier K."/>
            <person name="Gas S."/>
            <person name="Barry C.E. III"/>
            <person name="Tekaia F."/>
            <person name="Badcock K."/>
            <person name="Basham D."/>
            <person name="Brown D."/>
            <person name="Chillingworth T."/>
            <person name="Connor R."/>
            <person name="Davies R.M."/>
            <person name="Devlin K."/>
            <person name="Feltwell T."/>
            <person name="Gentles S."/>
            <person name="Hamlin N."/>
            <person name="Holroyd S."/>
            <person name="Hornsby T."/>
            <person name="Jagels K."/>
            <person name="Krogh A."/>
            <person name="McLean J."/>
            <person name="Moule S."/>
            <person name="Murphy L.D."/>
            <person name="Oliver S."/>
            <person name="Osborne J."/>
            <person name="Quail M.A."/>
            <person name="Rajandream M.A."/>
            <person name="Rogers J."/>
            <person name="Rutter S."/>
            <person name="Seeger K."/>
            <person name="Skelton S."/>
            <person name="Squares S."/>
            <person name="Squares R."/>
            <person name="Sulston J.E."/>
            <person name="Taylor K."/>
            <person name="Whitehead S."/>
            <person name="Barrell B.G."/>
        </authorList>
    </citation>
    <scope>NUCLEOTIDE SEQUENCE [LARGE SCALE GENOMIC DNA]</scope>
    <source>
        <strain>ATCC 25618 / H37Rv</strain>
    </source>
</reference>
<reference key="2">
    <citation type="journal article" date="2011" name="Mol. Cell. Proteomics">
        <title>Proteogenomic analysis of Mycobacterium tuberculosis by high resolution mass spectrometry.</title>
        <authorList>
            <person name="Kelkar D.S."/>
            <person name="Kumar D."/>
            <person name="Kumar P."/>
            <person name="Balakrishnan L."/>
            <person name="Muthusamy B."/>
            <person name="Yadav A.K."/>
            <person name="Shrivastava P."/>
            <person name="Marimuthu A."/>
            <person name="Anand S."/>
            <person name="Sundaram H."/>
            <person name="Kingsbury R."/>
            <person name="Harsha H.C."/>
            <person name="Nair B."/>
            <person name="Prasad T.S."/>
            <person name="Chauhan D.S."/>
            <person name="Katoch K."/>
            <person name="Katoch V.M."/>
            <person name="Kumar P."/>
            <person name="Chaerkady R."/>
            <person name="Ramachandran S."/>
            <person name="Dash D."/>
            <person name="Pandey A."/>
        </authorList>
    </citation>
    <scope>IDENTIFICATION BY MASS SPECTROMETRY [LARGE SCALE ANALYSIS]</scope>
    <source>
        <strain>ATCC 25618 / H37Rv</strain>
    </source>
</reference>
<sequence length="170" mass="18019">MSLSGPRIGRAHQQQGDTMAINVEPALSPHLVVDDAASAIDFYVKAFDAVELGRVPGPDGKLIHAALRINGFTVMLNDDVPQMCGGKSMTPTSLGGTPVTIHLTVTDVDAKFQRALNAGATVVTALEDQLWGDRYGVVADPFGHHWSLGQPVREVNMDEIQAAMSSQGDG</sequence>
<evidence type="ECO:0000255" key="1">
    <source>
        <dbReference type="PROSITE-ProRule" id="PRU01163"/>
    </source>
</evidence>
<evidence type="ECO:0000305" key="2"/>
<gene>
    <name type="ordered locus">Rv0887c</name>
    <name type="ORF">MTCY31.15c</name>
</gene>
<comment type="sequence caution" evidence="2">
    <conflict type="erroneous initiation">
        <sequence resource="EMBL-CDS" id="CCP43635"/>
    </conflict>
    <text>Truncated N-terminus.</text>
</comment>
<keyword id="KW-1185">Reference proteome</keyword>
<protein>
    <recommendedName>
        <fullName>Uncharacterized protein Rv0887c</fullName>
    </recommendedName>
</protein>
<name>Y887_MYCTU</name>
<feature type="chain" id="PRO_0000103729" description="Uncharacterized protein Rv0887c">
    <location>
        <begin position="1"/>
        <end position="170"/>
    </location>
</feature>
<feature type="domain" description="VOC" evidence="1">
    <location>
        <begin position="25"/>
        <end position="151"/>
    </location>
</feature>
<accession>P9WKQ3</accession>
<accession>L0T526</accession>
<accession>P64741</accession>
<accession>Q10548</accession>